<gene>
    <name type="primary">FOXL2</name>
</gene>
<feature type="chain" id="PRO_0000246178" description="Forkhead box protein L2">
    <location>
        <begin position="1"/>
        <end position="377"/>
    </location>
</feature>
<feature type="DNA-binding region" description="Fork-head" evidence="3">
    <location>
        <begin position="55"/>
        <end position="149"/>
    </location>
</feature>
<feature type="region of interest" description="Disordered" evidence="4">
    <location>
        <begin position="1"/>
        <end position="53"/>
    </location>
</feature>
<feature type="region of interest" description="Disordered" evidence="4">
    <location>
        <begin position="277"/>
        <end position="338"/>
    </location>
</feature>
<feature type="compositionally biased region" description="Basic residues" evidence="4">
    <location>
        <begin position="291"/>
        <end position="301"/>
    </location>
</feature>
<feature type="compositionally biased region" description="Pro residues" evidence="4">
    <location>
        <begin position="305"/>
        <end position="322"/>
    </location>
</feature>
<feature type="modified residue" description="Phosphoserine" evidence="2">
    <location>
        <position position="34"/>
    </location>
</feature>
<feature type="cross-link" description="Glycyl lysine isopeptide (Lys-Gly) (interchain with G-Cter in SUMO)" evidence="1">
    <location>
        <position position="25"/>
    </location>
</feature>
<comment type="function">
    <text evidence="1 5">Transcriptional regulator. Critical factor essential for ovary differentiation and maintenance, and repression of the genetic program for somatic testis determination (By similarity). Prevents trans-differentiation of ovary to testis through transcriptional repression of the Sertoli cell-promoting gene SOX9 (By similarity). Has apoptotic activity in ovarian cells (By similarity). Suppresses ESR1-mediated transcription of PTGS2/COX2 stimulated by tamoxifen (By similarity). Activates SIRT1 transcription under cellular stress conditions (By similarity). Activates transcription of OSR2 (By similarity). Is a transcriptional repressor of STAR (By similarity). Participates in SMAD3-dependent transcription of FST via the intronic SMAD-binding element (By similarity). Is a regulator of CYP19 expression.</text>
</comment>
<comment type="subunit">
    <text evidence="1">Interacts with ESR1. Interacts with UBE2I/UBC9. Interacts with SMAD3. Interacts with DDX20.</text>
</comment>
<comment type="subcellular location">
    <subcellularLocation>
        <location evidence="3">Nucleus</location>
    </subcellularLocation>
</comment>
<comment type="tissue specificity">
    <text evidence="5">Detected in the majority of somatic cells in the developing ovary.</text>
</comment>
<comment type="PTM">
    <text evidence="1">Sumoylated with SUMO1; sumoylation is required for transcriptional repression activity.</text>
</comment>
<name>FOXL2_CAPHI</name>
<protein>
    <recommendedName>
        <fullName>Forkhead box protein L2</fullName>
    </recommendedName>
</protein>
<accession>Q8MIP2</accession>
<evidence type="ECO:0000250" key="1"/>
<evidence type="ECO:0000250" key="2">
    <source>
        <dbReference type="UniProtKB" id="P58012"/>
    </source>
</evidence>
<evidence type="ECO:0000255" key="3">
    <source>
        <dbReference type="PROSITE-ProRule" id="PRU00089"/>
    </source>
</evidence>
<evidence type="ECO:0000256" key="4">
    <source>
        <dbReference type="SAM" id="MobiDB-lite"/>
    </source>
</evidence>
<evidence type="ECO:0000269" key="5">
    <source>
    </source>
</evidence>
<proteinExistence type="evidence at protein level"/>
<organism>
    <name type="scientific">Capra hircus</name>
    <name type="common">Goat</name>
    <dbReference type="NCBI Taxonomy" id="9925"/>
    <lineage>
        <taxon>Eukaryota</taxon>
        <taxon>Metazoa</taxon>
        <taxon>Chordata</taxon>
        <taxon>Craniata</taxon>
        <taxon>Vertebrata</taxon>
        <taxon>Euteleostomi</taxon>
        <taxon>Mammalia</taxon>
        <taxon>Eutheria</taxon>
        <taxon>Laurasiatheria</taxon>
        <taxon>Artiodactyla</taxon>
        <taxon>Ruminantia</taxon>
        <taxon>Pecora</taxon>
        <taxon>Bovidae</taxon>
        <taxon>Caprinae</taxon>
        <taxon>Capra</taxon>
    </lineage>
</organism>
<keyword id="KW-0221">Differentiation</keyword>
<keyword id="KW-0238">DNA-binding</keyword>
<keyword id="KW-1017">Isopeptide bond</keyword>
<keyword id="KW-0539">Nucleus</keyword>
<keyword id="KW-0597">Phosphoprotein</keyword>
<keyword id="KW-1185">Reference proteome</keyword>
<keyword id="KW-0804">Transcription</keyword>
<keyword id="KW-0805">Transcription regulation</keyword>
<keyword id="KW-0832">Ubl conjugation</keyword>
<reference key="1">
    <citation type="journal article" date="2005" name="Genomics">
        <title>Ovarian-specific expression of a new gene regulated by the goat PIS region and transcribed by a FOXL2 bidirectional promoter.</title>
        <authorList>
            <person name="Pannetier M."/>
            <person name="Renault L."/>
            <person name="Jolivet G."/>
            <person name="Cotinot C."/>
            <person name="Pailhoux E."/>
        </authorList>
    </citation>
    <scope>NUCLEOTIDE SEQUENCE [GENOMIC DNA]</scope>
</reference>
<reference key="2">
    <citation type="journal article" date="2006" name="J. Mol. Endocrinol.">
        <title>FOXL2 activates P450 aromatase gene transcription: towards a better characterization of the early steps of mammalian ovarian development.</title>
        <authorList>
            <person name="Pannetier M."/>
            <person name="Fabre S."/>
            <person name="Batista F."/>
            <person name="Kocer A."/>
            <person name="Renault L."/>
            <person name="Jolivet G."/>
            <person name="Mandon-Pepin B."/>
            <person name="Cotinot C."/>
            <person name="Veitia R."/>
            <person name="Pailhoux E."/>
        </authorList>
    </citation>
    <scope>FUNCTION AS TRANSCRIPTIONAL REGULATOR OF CYP19</scope>
    <scope>TISSUE SPECIFICITY</scope>
</reference>
<dbReference type="EMBL" id="AY112725">
    <property type="protein sequence ID" value="AAM52099.1"/>
    <property type="molecule type" value="Genomic_DNA"/>
</dbReference>
<dbReference type="RefSeq" id="XP_017905386.1">
    <property type="nucleotide sequence ID" value="XM_018049897.1"/>
</dbReference>
<dbReference type="SMR" id="Q8MIP2"/>
<dbReference type="Ensembl" id="ENSCHIT00020004240">
    <property type="protein sequence ID" value="ENSCHIP00020003192"/>
    <property type="gene ID" value="ENSCHIG00020001991"/>
</dbReference>
<dbReference type="Ensembl" id="ENSCHIT00040050763">
    <property type="protein sequence ID" value="ENSCHIP00040041030"/>
    <property type="gene ID" value="ENSCHIG00040023476"/>
</dbReference>
<dbReference type="GeneID" id="102191377"/>
<dbReference type="KEGG" id="chx:102191377"/>
<dbReference type="CTD" id="668"/>
<dbReference type="OrthoDB" id="6230630at2759"/>
<dbReference type="Proteomes" id="UP000291000">
    <property type="component" value="Unassembled WGS sequence"/>
</dbReference>
<dbReference type="Proteomes" id="UP000694566">
    <property type="component" value="Unplaced"/>
</dbReference>
<dbReference type="GO" id="GO:0005634">
    <property type="term" value="C:nucleus"/>
    <property type="evidence" value="ECO:0000250"/>
    <property type="project" value="AgBase"/>
</dbReference>
<dbReference type="GO" id="GO:0043028">
    <property type="term" value="F:cysteine-type endopeptidase regulator activity involved in apoptotic process"/>
    <property type="evidence" value="ECO:0000250"/>
    <property type="project" value="UniProtKB"/>
</dbReference>
<dbReference type="GO" id="GO:0003677">
    <property type="term" value="F:DNA binding"/>
    <property type="evidence" value="ECO:0000250"/>
    <property type="project" value="AgBase"/>
</dbReference>
<dbReference type="GO" id="GO:0003700">
    <property type="term" value="F:DNA-binding transcription factor activity"/>
    <property type="evidence" value="ECO:0000314"/>
    <property type="project" value="UniProtKB"/>
</dbReference>
<dbReference type="GO" id="GO:0000981">
    <property type="term" value="F:DNA-binding transcription factor activity, RNA polymerase II-specific"/>
    <property type="evidence" value="ECO:0007669"/>
    <property type="project" value="TreeGrafter"/>
</dbReference>
<dbReference type="GO" id="GO:0000978">
    <property type="term" value="F:RNA polymerase II cis-regulatory region sequence-specific DNA binding"/>
    <property type="evidence" value="ECO:0007669"/>
    <property type="project" value="TreeGrafter"/>
</dbReference>
<dbReference type="GO" id="GO:0006309">
    <property type="term" value="P:apoptotic DNA fragmentation"/>
    <property type="evidence" value="ECO:0000250"/>
    <property type="project" value="UniProtKB"/>
</dbReference>
<dbReference type="GO" id="GO:0048048">
    <property type="term" value="P:embryonic eye morphogenesis"/>
    <property type="evidence" value="ECO:0000250"/>
    <property type="project" value="AgBase"/>
</dbReference>
<dbReference type="GO" id="GO:0008210">
    <property type="term" value="P:estrogen metabolic process"/>
    <property type="evidence" value="ECO:0000303"/>
    <property type="project" value="UniProtKB"/>
</dbReference>
<dbReference type="GO" id="GO:0002074">
    <property type="term" value="P:extraocular skeletal muscle development"/>
    <property type="evidence" value="ECO:0000250"/>
    <property type="project" value="UniProtKB"/>
</dbReference>
<dbReference type="GO" id="GO:0019101">
    <property type="term" value="P:female somatic sex determination"/>
    <property type="evidence" value="ECO:0000250"/>
    <property type="project" value="AgBase"/>
</dbReference>
<dbReference type="GO" id="GO:0060014">
    <property type="term" value="P:granulosa cell differentiation"/>
    <property type="evidence" value="ECO:0000250"/>
    <property type="project" value="AgBase"/>
</dbReference>
<dbReference type="GO" id="GO:0001541">
    <property type="term" value="P:ovarian follicle development"/>
    <property type="evidence" value="ECO:0000270"/>
    <property type="project" value="UniProtKB"/>
</dbReference>
<dbReference type="GO" id="GO:0043065">
    <property type="term" value="P:positive regulation of apoptotic process"/>
    <property type="evidence" value="ECO:0000250"/>
    <property type="project" value="UniProtKB"/>
</dbReference>
<dbReference type="GO" id="GO:0045893">
    <property type="term" value="P:positive regulation of DNA-templated transcription"/>
    <property type="evidence" value="ECO:0000314"/>
    <property type="project" value="UniProtKB"/>
</dbReference>
<dbReference type="GO" id="GO:0045944">
    <property type="term" value="P:positive regulation of transcription by RNA polymerase II"/>
    <property type="evidence" value="ECO:0000250"/>
    <property type="project" value="AgBase"/>
</dbReference>
<dbReference type="CDD" id="cd20028">
    <property type="entry name" value="FH_FOXL2"/>
    <property type="match status" value="1"/>
</dbReference>
<dbReference type="FunFam" id="1.10.10.10:FF:000016">
    <property type="entry name" value="Forkhead box protein I1"/>
    <property type="match status" value="1"/>
</dbReference>
<dbReference type="Gene3D" id="1.10.10.10">
    <property type="entry name" value="Winged helix-like DNA-binding domain superfamily/Winged helix DNA-binding domain"/>
    <property type="match status" value="1"/>
</dbReference>
<dbReference type="InterPro" id="IPR047515">
    <property type="entry name" value="FH_FOXL2"/>
</dbReference>
<dbReference type="InterPro" id="IPR001766">
    <property type="entry name" value="Fork_head_dom"/>
</dbReference>
<dbReference type="InterPro" id="IPR050211">
    <property type="entry name" value="FOX_domain-containing"/>
</dbReference>
<dbReference type="InterPro" id="IPR018122">
    <property type="entry name" value="TF_fork_head_CS_1"/>
</dbReference>
<dbReference type="InterPro" id="IPR030456">
    <property type="entry name" value="TF_fork_head_CS_2"/>
</dbReference>
<dbReference type="InterPro" id="IPR036388">
    <property type="entry name" value="WH-like_DNA-bd_sf"/>
</dbReference>
<dbReference type="InterPro" id="IPR036390">
    <property type="entry name" value="WH_DNA-bd_sf"/>
</dbReference>
<dbReference type="PANTHER" id="PTHR11829">
    <property type="entry name" value="FORKHEAD BOX PROTEIN"/>
    <property type="match status" value="1"/>
</dbReference>
<dbReference type="PANTHER" id="PTHR11829:SF411">
    <property type="entry name" value="FORKHEAD BOX PROTEIN L2"/>
    <property type="match status" value="1"/>
</dbReference>
<dbReference type="Pfam" id="PF00250">
    <property type="entry name" value="Forkhead"/>
    <property type="match status" value="1"/>
</dbReference>
<dbReference type="PRINTS" id="PR00053">
    <property type="entry name" value="FORKHEAD"/>
</dbReference>
<dbReference type="SMART" id="SM00339">
    <property type="entry name" value="FH"/>
    <property type="match status" value="1"/>
</dbReference>
<dbReference type="SUPFAM" id="SSF46785">
    <property type="entry name" value="Winged helix' DNA-binding domain"/>
    <property type="match status" value="1"/>
</dbReference>
<dbReference type="PROSITE" id="PS00657">
    <property type="entry name" value="FORK_HEAD_1"/>
    <property type="match status" value="1"/>
</dbReference>
<dbReference type="PROSITE" id="PS00658">
    <property type="entry name" value="FORK_HEAD_2"/>
    <property type="match status" value="1"/>
</dbReference>
<dbReference type="PROSITE" id="PS50039">
    <property type="entry name" value="FORK_HEAD_3"/>
    <property type="match status" value="1"/>
</dbReference>
<sequence>MMASYPEPEDASGALLAPETGRAAKEPEAPAPPSPGKGGGGGAGAAPEKPDPAQKPPYSYVALIAMAIRESAEKRLTLSGIYQYIIAKFPFYEKNKKGWQNSIRHNLSLNECFIKVPREGGGERKGNYWTLDPACEDMFEKGNYRRRRRMKRPFRPPPAHFQPGKGLFGAGGAAGGCGVAGAGADGYGYLAPPKYLQSGFLNNSWPLPQPPSPMPYASCQMAAAAAAAAAAAAAAGPGSPGAAAVVKGLAGPAASYGPYSRVQSMALPPGVVNSYNGLGGPPAAPPPPPHPHSHPHAHHLHAAAAPPPAPPHHGAAAPPPGQLSPASPATAAPPAPAPTNAPGLQFACARQPELAMMHCSYWDHDSKTGALHSRLDL</sequence>